<keyword id="KW-0028">Amino-acid biosynthesis</keyword>
<keyword id="KW-0055">Arginine biosynthesis</keyword>
<keyword id="KW-0963">Cytoplasm</keyword>
<keyword id="KW-0238">DNA-binding</keyword>
<keyword id="KW-1185">Reference proteome</keyword>
<keyword id="KW-0678">Repressor</keyword>
<keyword id="KW-0804">Transcription</keyword>
<keyword id="KW-0805">Transcription regulation</keyword>
<name>ARGR_BIFAA</name>
<proteinExistence type="inferred from homology"/>
<dbReference type="EMBL" id="AP009256">
    <property type="protein sequence ID" value="BAF39701.1"/>
    <property type="molecule type" value="Genomic_DNA"/>
</dbReference>
<dbReference type="RefSeq" id="WP_003810288.1">
    <property type="nucleotide sequence ID" value="NZ_CAXVKE010000001.1"/>
</dbReference>
<dbReference type="SMR" id="A1A1W8"/>
<dbReference type="STRING" id="367928.BAD_0920"/>
<dbReference type="PaxDb" id="1680-BADO_0985"/>
<dbReference type="GeneID" id="4557396"/>
<dbReference type="KEGG" id="bad:BAD_0920"/>
<dbReference type="HOGENOM" id="CLU_097103_1_1_11"/>
<dbReference type="UniPathway" id="UPA00068"/>
<dbReference type="Proteomes" id="UP000008702">
    <property type="component" value="Chromosome"/>
</dbReference>
<dbReference type="GO" id="GO:0005737">
    <property type="term" value="C:cytoplasm"/>
    <property type="evidence" value="ECO:0007669"/>
    <property type="project" value="UniProtKB-SubCell"/>
</dbReference>
<dbReference type="GO" id="GO:0034618">
    <property type="term" value="F:arginine binding"/>
    <property type="evidence" value="ECO:0007669"/>
    <property type="project" value="InterPro"/>
</dbReference>
<dbReference type="GO" id="GO:0003677">
    <property type="term" value="F:DNA binding"/>
    <property type="evidence" value="ECO:0007669"/>
    <property type="project" value="UniProtKB-KW"/>
</dbReference>
<dbReference type="GO" id="GO:0003700">
    <property type="term" value="F:DNA-binding transcription factor activity"/>
    <property type="evidence" value="ECO:0007669"/>
    <property type="project" value="UniProtKB-UniRule"/>
</dbReference>
<dbReference type="GO" id="GO:0006526">
    <property type="term" value="P:L-arginine biosynthetic process"/>
    <property type="evidence" value="ECO:0007669"/>
    <property type="project" value="UniProtKB-UniPathway"/>
</dbReference>
<dbReference type="GO" id="GO:0051259">
    <property type="term" value="P:protein complex oligomerization"/>
    <property type="evidence" value="ECO:0007669"/>
    <property type="project" value="InterPro"/>
</dbReference>
<dbReference type="GO" id="GO:1900079">
    <property type="term" value="P:regulation of arginine biosynthetic process"/>
    <property type="evidence" value="ECO:0007669"/>
    <property type="project" value="UniProtKB-UniRule"/>
</dbReference>
<dbReference type="Gene3D" id="3.30.1360.40">
    <property type="match status" value="1"/>
</dbReference>
<dbReference type="Gene3D" id="1.10.10.10">
    <property type="entry name" value="Winged helix-like DNA-binding domain superfamily/Winged helix DNA-binding domain"/>
    <property type="match status" value="1"/>
</dbReference>
<dbReference type="HAMAP" id="MF_00173">
    <property type="entry name" value="Arg_repressor"/>
    <property type="match status" value="1"/>
</dbReference>
<dbReference type="InterPro" id="IPR001669">
    <property type="entry name" value="Arg_repress"/>
</dbReference>
<dbReference type="InterPro" id="IPR020899">
    <property type="entry name" value="Arg_repress_C"/>
</dbReference>
<dbReference type="InterPro" id="IPR036251">
    <property type="entry name" value="Arg_repress_C_sf"/>
</dbReference>
<dbReference type="InterPro" id="IPR020900">
    <property type="entry name" value="Arg_repress_DNA-bd"/>
</dbReference>
<dbReference type="InterPro" id="IPR036388">
    <property type="entry name" value="WH-like_DNA-bd_sf"/>
</dbReference>
<dbReference type="InterPro" id="IPR036390">
    <property type="entry name" value="WH_DNA-bd_sf"/>
</dbReference>
<dbReference type="PANTHER" id="PTHR34471">
    <property type="entry name" value="ARGININE REPRESSOR"/>
    <property type="match status" value="1"/>
</dbReference>
<dbReference type="PANTHER" id="PTHR34471:SF1">
    <property type="entry name" value="ARGININE REPRESSOR"/>
    <property type="match status" value="1"/>
</dbReference>
<dbReference type="Pfam" id="PF01316">
    <property type="entry name" value="Arg_repressor"/>
    <property type="match status" value="1"/>
</dbReference>
<dbReference type="Pfam" id="PF02863">
    <property type="entry name" value="Arg_repressor_C"/>
    <property type="match status" value="1"/>
</dbReference>
<dbReference type="PRINTS" id="PR01467">
    <property type="entry name" value="ARGREPRESSOR"/>
</dbReference>
<dbReference type="SUPFAM" id="SSF55252">
    <property type="entry name" value="C-terminal domain of arginine repressor"/>
    <property type="match status" value="1"/>
</dbReference>
<dbReference type="SUPFAM" id="SSF46785">
    <property type="entry name" value="Winged helix' DNA-binding domain"/>
    <property type="match status" value="1"/>
</dbReference>
<evidence type="ECO:0000255" key="1">
    <source>
        <dbReference type="HAMAP-Rule" id="MF_00173"/>
    </source>
</evidence>
<accession>A1A1W8</accession>
<reference key="1">
    <citation type="submission" date="2006-12" db="EMBL/GenBank/DDBJ databases">
        <title>Bifidobacterium adolescentis complete genome sequence.</title>
        <authorList>
            <person name="Suzuki T."/>
            <person name="Tsuda Y."/>
            <person name="Kanou N."/>
            <person name="Inoue T."/>
            <person name="Kumazaki K."/>
            <person name="Nagano S."/>
            <person name="Hirai S."/>
            <person name="Tanaka K."/>
            <person name="Watanabe K."/>
        </authorList>
    </citation>
    <scope>NUCLEOTIDE SEQUENCE [LARGE SCALE GENOMIC DNA]</scope>
    <source>
        <strain>ATCC 15703 / DSM 20083 / NCTC 11814 / E194a</strain>
    </source>
</reference>
<sequence>MTDHTPALQRPATRTARLSAIEQALLTRIVTSQSQLSQILADQGIEVTQATLSRDLDEIHATKTRLADGTVAYAVGKQNIDEHPASNPDAKTEQQISRVLSGLVTSVAAARNLVVVHTPSGAAQYVASVIDKQPIEGVLGTIAGDDTVMVICSEDDVAKRRAQWLLDVASKA</sequence>
<organism>
    <name type="scientific">Bifidobacterium adolescentis (strain ATCC 15703 / DSM 20083 / NCTC 11814 / E194a)</name>
    <dbReference type="NCBI Taxonomy" id="367928"/>
    <lineage>
        <taxon>Bacteria</taxon>
        <taxon>Bacillati</taxon>
        <taxon>Actinomycetota</taxon>
        <taxon>Actinomycetes</taxon>
        <taxon>Bifidobacteriales</taxon>
        <taxon>Bifidobacteriaceae</taxon>
        <taxon>Bifidobacterium</taxon>
    </lineage>
</organism>
<comment type="function">
    <text evidence="1">Regulates arginine biosynthesis genes.</text>
</comment>
<comment type="pathway">
    <text>Amino-acid biosynthesis; L-arginine biosynthesis [regulation].</text>
</comment>
<comment type="subcellular location">
    <subcellularLocation>
        <location evidence="1">Cytoplasm</location>
    </subcellularLocation>
</comment>
<comment type="similarity">
    <text evidence="1">Belongs to the ArgR family.</text>
</comment>
<feature type="chain" id="PRO_1000023548" description="Arginine repressor">
    <location>
        <begin position="1"/>
        <end position="172"/>
    </location>
</feature>
<protein>
    <recommendedName>
        <fullName evidence="1">Arginine repressor</fullName>
    </recommendedName>
</protein>
<gene>
    <name evidence="1" type="primary">argR</name>
    <name type="ordered locus">BAD_0920</name>
</gene>